<dbReference type="EMBL" id="CP000969">
    <property type="protein sequence ID" value="ACB08840.1"/>
    <property type="molecule type" value="Genomic_DNA"/>
</dbReference>
<dbReference type="RefSeq" id="WP_004081515.1">
    <property type="nucleotide sequence ID" value="NC_010483.1"/>
</dbReference>
<dbReference type="SMR" id="B1L942"/>
<dbReference type="KEGG" id="trq:TRQ2_0484"/>
<dbReference type="HOGENOM" id="CLU_190949_0_1_0"/>
<dbReference type="Proteomes" id="UP000001687">
    <property type="component" value="Chromosome"/>
</dbReference>
<dbReference type="GO" id="GO:0005737">
    <property type="term" value="C:cytoplasm"/>
    <property type="evidence" value="ECO:0007669"/>
    <property type="project" value="UniProtKB-ARBA"/>
</dbReference>
<dbReference type="GO" id="GO:1990904">
    <property type="term" value="C:ribonucleoprotein complex"/>
    <property type="evidence" value="ECO:0007669"/>
    <property type="project" value="UniProtKB-KW"/>
</dbReference>
<dbReference type="GO" id="GO:0005840">
    <property type="term" value="C:ribosome"/>
    <property type="evidence" value="ECO:0007669"/>
    <property type="project" value="UniProtKB-KW"/>
</dbReference>
<dbReference type="GO" id="GO:0003735">
    <property type="term" value="F:structural constituent of ribosome"/>
    <property type="evidence" value="ECO:0007669"/>
    <property type="project" value="InterPro"/>
</dbReference>
<dbReference type="GO" id="GO:0006412">
    <property type="term" value="P:translation"/>
    <property type="evidence" value="ECO:0007669"/>
    <property type="project" value="UniProtKB-UniRule"/>
</dbReference>
<dbReference type="Gene3D" id="2.20.28.120">
    <property type="entry name" value="Ribosomal protein L33"/>
    <property type="match status" value="1"/>
</dbReference>
<dbReference type="HAMAP" id="MF_00294">
    <property type="entry name" value="Ribosomal_bL33"/>
    <property type="match status" value="1"/>
</dbReference>
<dbReference type="InterPro" id="IPR001705">
    <property type="entry name" value="Ribosomal_bL33"/>
</dbReference>
<dbReference type="InterPro" id="IPR018264">
    <property type="entry name" value="Ribosomal_bL33_CS"/>
</dbReference>
<dbReference type="InterPro" id="IPR038584">
    <property type="entry name" value="Ribosomal_bL33_sf"/>
</dbReference>
<dbReference type="InterPro" id="IPR011332">
    <property type="entry name" value="Ribosomal_zn-bd"/>
</dbReference>
<dbReference type="NCBIfam" id="NF001764">
    <property type="entry name" value="PRK00504.1"/>
    <property type="match status" value="1"/>
</dbReference>
<dbReference type="NCBIfam" id="NF001860">
    <property type="entry name" value="PRK00595.1"/>
    <property type="match status" value="1"/>
</dbReference>
<dbReference type="NCBIfam" id="TIGR01023">
    <property type="entry name" value="rpmG_bact"/>
    <property type="match status" value="1"/>
</dbReference>
<dbReference type="PANTHER" id="PTHR43168">
    <property type="entry name" value="50S RIBOSOMAL PROTEIN L33, CHLOROPLASTIC"/>
    <property type="match status" value="1"/>
</dbReference>
<dbReference type="PANTHER" id="PTHR43168:SF6">
    <property type="entry name" value="LARGE RIBOSOMAL SUBUNIT PROTEIN BL33A"/>
    <property type="match status" value="1"/>
</dbReference>
<dbReference type="Pfam" id="PF00471">
    <property type="entry name" value="Ribosomal_L33"/>
    <property type="match status" value="1"/>
</dbReference>
<dbReference type="SUPFAM" id="SSF57829">
    <property type="entry name" value="Zn-binding ribosomal proteins"/>
    <property type="match status" value="1"/>
</dbReference>
<dbReference type="PROSITE" id="PS00582">
    <property type="entry name" value="RIBOSOMAL_L33"/>
    <property type="match status" value="1"/>
</dbReference>
<gene>
    <name evidence="1" type="primary">rpmG</name>
    <name type="ordered locus">TRQ2_0484</name>
</gene>
<keyword id="KW-0687">Ribonucleoprotein</keyword>
<keyword id="KW-0689">Ribosomal protein</keyword>
<feature type="chain" id="PRO_0000356767" description="Large ribosomal subunit protein bL33">
    <location>
        <begin position="1"/>
        <end position="49"/>
    </location>
</feature>
<organism>
    <name type="scientific">Thermotoga sp. (strain RQ2)</name>
    <dbReference type="NCBI Taxonomy" id="126740"/>
    <lineage>
        <taxon>Bacteria</taxon>
        <taxon>Thermotogati</taxon>
        <taxon>Thermotogota</taxon>
        <taxon>Thermotogae</taxon>
        <taxon>Thermotogales</taxon>
        <taxon>Thermotogaceae</taxon>
        <taxon>Thermotoga</taxon>
    </lineage>
</organism>
<accession>B1L942</accession>
<protein>
    <recommendedName>
        <fullName evidence="1">Large ribosomal subunit protein bL33</fullName>
    </recommendedName>
    <alternativeName>
        <fullName evidence="2">50S ribosomal protein L33</fullName>
    </alternativeName>
</protein>
<name>RL33_THESQ</name>
<sequence length="49" mass="5744">MRVKVALKCSQCGNKNYYTTRNKDKRAKLELRKYCPKCNAHTIHTETKA</sequence>
<evidence type="ECO:0000255" key="1">
    <source>
        <dbReference type="HAMAP-Rule" id="MF_00294"/>
    </source>
</evidence>
<evidence type="ECO:0000305" key="2"/>
<comment type="similarity">
    <text evidence="1">Belongs to the bacterial ribosomal protein bL33 family.</text>
</comment>
<reference key="1">
    <citation type="journal article" date="2011" name="J. Bacteriol.">
        <title>Genome sequence of Thermotoga sp. strain RQ2, a hyperthermophilic bacterium isolated from a geothermally heated region of the seafloor near Ribeira Quente, the Azores.</title>
        <authorList>
            <person name="Swithers K.S."/>
            <person name="DiPippo J.L."/>
            <person name="Bruce D.C."/>
            <person name="Detter C."/>
            <person name="Tapia R."/>
            <person name="Han S."/>
            <person name="Saunders E."/>
            <person name="Goodwin L.A."/>
            <person name="Han J."/>
            <person name="Woyke T."/>
            <person name="Pitluck S."/>
            <person name="Pennacchio L."/>
            <person name="Nolan M."/>
            <person name="Mikhailova N."/>
            <person name="Lykidis A."/>
            <person name="Land M.L."/>
            <person name="Brettin T."/>
            <person name="Stetter K.O."/>
            <person name="Nelson K.E."/>
            <person name="Gogarten J.P."/>
            <person name="Noll K.M."/>
        </authorList>
    </citation>
    <scope>NUCLEOTIDE SEQUENCE [LARGE SCALE GENOMIC DNA]</scope>
    <source>
        <strain>RQ2</strain>
    </source>
</reference>
<proteinExistence type="inferred from homology"/>